<dbReference type="EMBL" id="L42023">
    <property type="protein sequence ID" value="AAC23230.1"/>
    <property type="status" value="ALT_FRAME"/>
    <property type="molecule type" value="Genomic_DNA"/>
</dbReference>
<dbReference type="EMBL" id="L42023">
    <property type="protein sequence ID" value="AAC23229.1"/>
    <property type="status" value="ALT_FRAME"/>
    <property type="molecule type" value="Genomic_DNA"/>
</dbReference>
<dbReference type="PIR" id="A64037">
    <property type="entry name" value="A64037"/>
</dbReference>
<dbReference type="PIR" id="B64037">
    <property type="entry name" value="B64037"/>
</dbReference>
<dbReference type="STRING" id="71421.HI_1582"/>
<dbReference type="EnsemblBacteria" id="AAC23229">
    <property type="protein sequence ID" value="AAC23229"/>
    <property type="gene ID" value="HI_1581"/>
</dbReference>
<dbReference type="EnsemblBacteria" id="AAC23230">
    <property type="protein sequence ID" value="AAC23230"/>
    <property type="gene ID" value="HI_1582"/>
</dbReference>
<dbReference type="KEGG" id="hin:HI_1581"/>
<dbReference type="KEGG" id="hin:HI_1582"/>
<dbReference type="eggNOG" id="COG3102">
    <property type="taxonomic scope" value="Bacteria"/>
</dbReference>
<dbReference type="HOGENOM" id="CLU_2990370_0_0_6"/>
<dbReference type="PhylomeDB" id="P44262"/>
<dbReference type="Proteomes" id="UP000000579">
    <property type="component" value="Chromosome"/>
</dbReference>
<dbReference type="GO" id="GO:0005829">
    <property type="term" value="C:cytosol"/>
    <property type="evidence" value="ECO:0000318"/>
    <property type="project" value="GO_Central"/>
</dbReference>
<dbReference type="CDD" id="cd07268">
    <property type="entry name" value="VOC_EcYecM_like"/>
    <property type="match status" value="1"/>
</dbReference>
<dbReference type="FunFam" id="3.10.180.10:FF:000005">
    <property type="entry name" value="YecM family protein"/>
    <property type="match status" value="1"/>
</dbReference>
<dbReference type="Gene3D" id="3.10.180.10">
    <property type="entry name" value="2,3-Dihydroxybiphenyl 1,2-Dioxygenase, domain 1"/>
    <property type="match status" value="1"/>
</dbReference>
<dbReference type="InterPro" id="IPR010393">
    <property type="entry name" value="DUF991_YecM-like"/>
</dbReference>
<dbReference type="InterPro" id="IPR029068">
    <property type="entry name" value="Glyas_Bleomycin-R_OHBP_Dase"/>
</dbReference>
<dbReference type="NCBIfam" id="NF008680">
    <property type="entry name" value="PRK11700.1-3"/>
    <property type="match status" value="1"/>
</dbReference>
<dbReference type="PANTHER" id="PTHR37519">
    <property type="match status" value="1"/>
</dbReference>
<dbReference type="PANTHER" id="PTHR37519:SF1">
    <property type="entry name" value="DIHYDROXYBIPHENYL DIOXYGENASE DOMAIN-CONTAINING PROTEIN"/>
    <property type="match status" value="1"/>
</dbReference>
<dbReference type="Pfam" id="PF06185">
    <property type="entry name" value="YecM"/>
    <property type="match status" value="1"/>
</dbReference>
<dbReference type="SUPFAM" id="SSF54593">
    <property type="entry name" value="Glyoxalase/Bleomycin resistance protein/Dihydroxybiphenyl dioxygenase"/>
    <property type="match status" value="1"/>
</dbReference>
<evidence type="ECO:0000305" key="1"/>
<comment type="similarity">
    <text evidence="1">To E.coli YecM.</text>
</comment>
<comment type="sequence caution" evidence="1">
    <conflict type="frameshift">
        <sequence resource="EMBL-CDS" id="AAC23229"/>
    </conflict>
</comment>
<reference key="1">
    <citation type="journal article" date="1995" name="Science">
        <title>Whole-genome random sequencing and assembly of Haemophilus influenzae Rd.</title>
        <authorList>
            <person name="Fleischmann R.D."/>
            <person name="Adams M.D."/>
            <person name="White O."/>
            <person name="Clayton R.A."/>
            <person name="Kirkness E.F."/>
            <person name="Kerlavage A.R."/>
            <person name="Bult C.J."/>
            <person name="Tomb J.-F."/>
            <person name="Dougherty B.A."/>
            <person name="Merrick J.M."/>
            <person name="McKenney K."/>
            <person name="Sutton G.G."/>
            <person name="FitzHugh W."/>
            <person name="Fields C.A."/>
            <person name="Gocayne J.D."/>
            <person name="Scott J.D."/>
            <person name="Shirley R."/>
            <person name="Liu L.-I."/>
            <person name="Glodek A."/>
            <person name="Kelley J.M."/>
            <person name="Weidman J.F."/>
            <person name="Phillips C.A."/>
            <person name="Spriggs T."/>
            <person name="Hedblom E."/>
            <person name="Cotton M.D."/>
            <person name="Utterback T.R."/>
            <person name="Hanna M.C."/>
            <person name="Nguyen D.T."/>
            <person name="Saudek D.M."/>
            <person name="Brandon R.C."/>
            <person name="Fine L.D."/>
            <person name="Fritchman J.L."/>
            <person name="Fuhrmann J.L."/>
            <person name="Geoghagen N.S.M."/>
            <person name="Gnehm C.L."/>
            <person name="McDonald L.A."/>
            <person name="Small K.V."/>
            <person name="Fraser C.M."/>
            <person name="Smith H.O."/>
            <person name="Venter J.C."/>
        </authorList>
    </citation>
    <scope>NUCLEOTIDE SEQUENCE [LARGE SCALE GENOMIC DNA]</scope>
    <source>
        <strain>ATCC 51907 / DSM 11121 / KW20 / Rd</strain>
    </source>
</reference>
<keyword id="KW-1185">Reference proteome</keyword>
<proteinExistence type="predicted"/>
<accession>P44262</accession>
<accession>P44261</accession>
<protein>
    <recommendedName>
        <fullName>Uncharacterized protein HI_1581/HI_1582</fullName>
    </recommendedName>
</protein>
<sequence>MTNLQENLTALSADLAIFERKIQHLAKEMTIDLSHYEIDHLALRVNSEQSAKNWLILLLKCGRILSDNIVNGRKIYLIELEKPVKFANQFVDIIELPLPKNKKYPIEGWEHIEIVMPFLPKESINEWINRVNMYFLXLTQLTIKVSEPKVDGERLPNPSIAVSFTDKTVNHTCIKVHPYSIKKYLRFSKNE</sequence>
<feature type="chain" id="PRO_0000169080" description="Uncharacterized protein HI_1581/HI_1582">
    <location>
        <begin position="1"/>
        <end position="191"/>
    </location>
</feature>
<organism>
    <name type="scientific">Haemophilus influenzae (strain ATCC 51907 / DSM 11121 / KW20 / Rd)</name>
    <dbReference type="NCBI Taxonomy" id="71421"/>
    <lineage>
        <taxon>Bacteria</taxon>
        <taxon>Pseudomonadati</taxon>
        <taxon>Pseudomonadota</taxon>
        <taxon>Gammaproteobacteria</taxon>
        <taxon>Pasteurellales</taxon>
        <taxon>Pasteurellaceae</taxon>
        <taxon>Haemophilus</taxon>
    </lineage>
</organism>
<gene>
    <name type="ordered locus">HI_1581/HI_1582</name>
</gene>
<name>Y1581_HAEIN</name>